<dbReference type="EMBL" id="CP001283">
    <property type="protein sequence ID" value="ACK88404.1"/>
    <property type="molecule type" value="Genomic_DNA"/>
</dbReference>
<dbReference type="RefSeq" id="WP_000944957.1">
    <property type="nucleotide sequence ID" value="NC_011773.1"/>
</dbReference>
<dbReference type="SMR" id="B7JQ28"/>
<dbReference type="GeneID" id="92884982"/>
<dbReference type="KEGG" id="bcu:BCAH820_4522"/>
<dbReference type="HOGENOM" id="CLU_095424_4_0_9"/>
<dbReference type="Proteomes" id="UP000001363">
    <property type="component" value="Chromosome"/>
</dbReference>
<dbReference type="GO" id="GO:0022625">
    <property type="term" value="C:cytosolic large ribosomal subunit"/>
    <property type="evidence" value="ECO:0007669"/>
    <property type="project" value="TreeGrafter"/>
</dbReference>
<dbReference type="GO" id="GO:0003735">
    <property type="term" value="F:structural constituent of ribosome"/>
    <property type="evidence" value="ECO:0007669"/>
    <property type="project" value="InterPro"/>
</dbReference>
<dbReference type="GO" id="GO:0006412">
    <property type="term" value="P:translation"/>
    <property type="evidence" value="ECO:0007669"/>
    <property type="project" value="UniProtKB-UniRule"/>
</dbReference>
<dbReference type="FunFam" id="2.40.50.100:FF:000004">
    <property type="entry name" value="50S ribosomal protein L27"/>
    <property type="match status" value="1"/>
</dbReference>
<dbReference type="Gene3D" id="2.40.50.100">
    <property type="match status" value="1"/>
</dbReference>
<dbReference type="HAMAP" id="MF_00539">
    <property type="entry name" value="Ribosomal_bL27"/>
    <property type="match status" value="1"/>
</dbReference>
<dbReference type="InterPro" id="IPR001684">
    <property type="entry name" value="Ribosomal_bL27"/>
</dbReference>
<dbReference type="InterPro" id="IPR018261">
    <property type="entry name" value="Ribosomal_bL27_CS"/>
</dbReference>
<dbReference type="NCBIfam" id="TIGR00062">
    <property type="entry name" value="L27"/>
    <property type="match status" value="1"/>
</dbReference>
<dbReference type="PANTHER" id="PTHR15893:SF0">
    <property type="entry name" value="LARGE RIBOSOMAL SUBUNIT PROTEIN BL27M"/>
    <property type="match status" value="1"/>
</dbReference>
<dbReference type="PANTHER" id="PTHR15893">
    <property type="entry name" value="RIBOSOMAL PROTEIN L27"/>
    <property type="match status" value="1"/>
</dbReference>
<dbReference type="Pfam" id="PF01016">
    <property type="entry name" value="Ribosomal_L27"/>
    <property type="match status" value="1"/>
</dbReference>
<dbReference type="PRINTS" id="PR00063">
    <property type="entry name" value="RIBOSOMALL27"/>
</dbReference>
<dbReference type="SUPFAM" id="SSF110324">
    <property type="entry name" value="Ribosomal L27 protein-like"/>
    <property type="match status" value="1"/>
</dbReference>
<dbReference type="PROSITE" id="PS00831">
    <property type="entry name" value="RIBOSOMAL_L27"/>
    <property type="match status" value="1"/>
</dbReference>
<evidence type="ECO:0000250" key="1">
    <source>
        <dbReference type="UniProtKB" id="Q2FXT0"/>
    </source>
</evidence>
<evidence type="ECO:0000255" key="2">
    <source>
        <dbReference type="HAMAP-Rule" id="MF_00539"/>
    </source>
</evidence>
<evidence type="ECO:0000256" key="3">
    <source>
        <dbReference type="SAM" id="MobiDB-lite"/>
    </source>
</evidence>
<evidence type="ECO:0000305" key="4"/>
<gene>
    <name evidence="2" type="primary">rpmA</name>
    <name type="ordered locus">BCAH820_4522</name>
</gene>
<feature type="propeptide" id="PRO_0000459852" evidence="1">
    <location>
        <begin position="1"/>
        <end position="9"/>
    </location>
</feature>
<feature type="chain" id="PRO_1000128691" description="Large ribosomal subunit protein bL27">
    <location>
        <begin position="10"/>
        <end position="96"/>
    </location>
</feature>
<feature type="region of interest" description="Disordered" evidence="3">
    <location>
        <begin position="14"/>
        <end position="36"/>
    </location>
</feature>
<organism>
    <name type="scientific">Bacillus cereus (strain AH820)</name>
    <dbReference type="NCBI Taxonomy" id="405535"/>
    <lineage>
        <taxon>Bacteria</taxon>
        <taxon>Bacillati</taxon>
        <taxon>Bacillota</taxon>
        <taxon>Bacilli</taxon>
        <taxon>Bacillales</taxon>
        <taxon>Bacillaceae</taxon>
        <taxon>Bacillus</taxon>
        <taxon>Bacillus cereus group</taxon>
    </lineage>
</organism>
<accession>B7JQ28</accession>
<proteinExistence type="inferred from homology"/>
<comment type="PTM">
    <text evidence="1">The N-terminus is cleaved by ribosomal processing cysteine protease Prp.</text>
</comment>
<comment type="similarity">
    <text evidence="2">Belongs to the bacterial ribosomal protein bL27 family.</text>
</comment>
<reference key="1">
    <citation type="submission" date="2008-10" db="EMBL/GenBank/DDBJ databases">
        <title>Genome sequence of Bacillus cereus AH820.</title>
        <authorList>
            <person name="Dodson R.J."/>
            <person name="Durkin A.S."/>
            <person name="Rosovitz M.J."/>
            <person name="Rasko D.A."/>
            <person name="Hoffmaster A."/>
            <person name="Ravel J."/>
            <person name="Sutton G."/>
        </authorList>
    </citation>
    <scope>NUCLEOTIDE SEQUENCE [LARGE SCALE GENOMIC DNA]</scope>
    <source>
        <strain>AH820</strain>
    </source>
</reference>
<keyword id="KW-0687">Ribonucleoprotein</keyword>
<keyword id="KW-0689">Ribosomal protein</keyword>
<protein>
    <recommendedName>
        <fullName evidence="2">Large ribosomal subunit protein bL27</fullName>
    </recommendedName>
    <alternativeName>
        <fullName evidence="4">50S ribosomal protein L27</fullName>
    </alternativeName>
</protein>
<name>RL27_BACC0</name>
<sequence length="96" mass="10491">MLRLDLQFFASKKGVGSTKNGRDSQSKRLGAKRADGQTVSGGSILYRQRGTKIYPGVNVGRGGDDTLYAKVDGVVRFERLGRDRKQVSVYPVAQEA</sequence>